<accession>P14109</accession>
<accession>Q7PCF8</accession>
<comment type="function">
    <text>In the absence of gp17, P22 is sensitive to a superinfection exclusion system of the fel-2 prophage.</text>
</comment>
<reference key="1">
    <citation type="journal article" date="1989" name="J. Mol. Biol.">
        <title>Genetic structure of the bacteriophage P22 PL operon.</title>
        <authorList>
            <person name="Semerjian A.V."/>
            <person name="Malloy D.C."/>
            <person name="Poteete A.R."/>
        </authorList>
    </citation>
    <scope>NUCLEOTIDE SEQUENCE [GENOMIC DNA]</scope>
</reference>
<reference key="2">
    <citation type="journal article" date="2000" name="J. Bacteriol.">
        <title>Sequence of the genome of Salmonella bacteriophage P22.</title>
        <authorList>
            <person name="Vander Byl C.S."/>
            <person name="Kropinski A.M.B."/>
        </authorList>
    </citation>
    <scope>NUCLEOTIDE SEQUENCE [LARGE SCALE GENOMIC DNA]</scope>
</reference>
<reference key="3">
    <citation type="journal article" date="2003" name="J. Bacteriol.">
        <title>Corrected sequence of the bacteriophage P22 genome.</title>
        <authorList>
            <person name="Pedulla M.L."/>
            <person name="Ford M.E."/>
            <person name="Karthikeyan T."/>
            <person name="Houtz J.M."/>
            <person name="Hendrix R.W."/>
            <person name="Hatfull G.F."/>
            <person name="Poteete A.R."/>
            <person name="Gilcrease E.B."/>
            <person name="Winn-Stapley D.A."/>
            <person name="Casjens S.R."/>
        </authorList>
    </citation>
    <scope>NUCLEOTIDE SEQUENCE [LARGE SCALE GENOMIC DNA]</scope>
</reference>
<organism>
    <name type="scientific">Salmonella phage P22</name>
    <name type="common">Bacteriophage P22</name>
    <dbReference type="NCBI Taxonomy" id="10754"/>
    <lineage>
        <taxon>Viruses</taxon>
        <taxon>Duplodnaviria</taxon>
        <taxon>Heunggongvirae</taxon>
        <taxon>Uroviricota</taxon>
        <taxon>Caudoviricetes</taxon>
        <taxon>Lederbergvirus</taxon>
    </lineage>
</organism>
<name>VG17_BPP22</name>
<dbReference type="EMBL" id="X15637">
    <property type="protein sequence ID" value="CAA33650.1"/>
    <property type="molecule type" value="Genomic_DNA"/>
</dbReference>
<dbReference type="EMBL" id="AF217253">
    <property type="protein sequence ID" value="AAF75018.1"/>
    <property type="molecule type" value="Genomic_DNA"/>
</dbReference>
<dbReference type="EMBL" id="BK000583">
    <property type="protein sequence ID" value="DAA01015.1"/>
    <property type="molecule type" value="Genomic_DNA"/>
</dbReference>
<dbReference type="PIR" id="S04246">
    <property type="entry name" value="W1BP22"/>
</dbReference>
<dbReference type="RefSeq" id="NP_059600.1">
    <property type="nucleotide sequence ID" value="NC_002371.2"/>
</dbReference>
<dbReference type="GeneID" id="1262789"/>
<dbReference type="KEGG" id="vg:1262789"/>
<dbReference type="OrthoDB" id="17947at10239"/>
<dbReference type="Proteomes" id="UP000001795">
    <property type="component" value="Segment"/>
</dbReference>
<dbReference type="Proteomes" id="UP000007960">
    <property type="component" value="Segment"/>
</dbReference>
<dbReference type="InterPro" id="IPR020285">
    <property type="entry name" value="Gp17"/>
</dbReference>
<dbReference type="Pfam" id="PF17420">
    <property type="entry name" value="GP17"/>
    <property type="match status" value="1"/>
</dbReference>
<protein>
    <recommendedName>
        <fullName>Superinfection exclusion protein</fullName>
    </recommendedName>
    <alternativeName>
        <fullName>Protein gp17</fullName>
    </alternativeName>
</protein>
<proteinExistence type="predicted"/>
<gene>
    <name type="primary">17</name>
</gene>
<sequence>MKLRVWHIPQVPMKPFIVEVGSVEEGVRMMDALADYDAFQYDNNIKPDYCNANGLQMFDESLTDQDLEDMELDDRWIDWYSECQCYDDPREYLESLKEETTAA</sequence>
<organismHost>
    <name type="scientific">Salmonella typhimurium</name>
    <dbReference type="NCBI Taxonomy" id="90371"/>
</organismHost>
<feature type="chain" id="PRO_0000077764" description="Superinfection exclusion protein">
    <location>
        <begin position="1"/>
        <end position="103"/>
    </location>
</feature>
<keyword id="KW-1185">Reference proteome</keyword>